<protein>
    <recommendedName>
        <fullName evidence="1">Small ribosomal subunit protein uS5</fullName>
    </recommendedName>
    <alternativeName>
        <fullName evidence="2">30S ribosomal protein S5</fullName>
    </alternativeName>
</protein>
<name>RS5_NOSS1</name>
<accession>Q8YPJ5</accession>
<organism>
    <name type="scientific">Nostoc sp. (strain PCC 7120 / SAG 25.82 / UTEX 2576)</name>
    <dbReference type="NCBI Taxonomy" id="103690"/>
    <lineage>
        <taxon>Bacteria</taxon>
        <taxon>Bacillati</taxon>
        <taxon>Cyanobacteriota</taxon>
        <taxon>Cyanophyceae</taxon>
        <taxon>Nostocales</taxon>
        <taxon>Nostocaceae</taxon>
        <taxon>Nostoc</taxon>
    </lineage>
</organism>
<evidence type="ECO:0000255" key="1">
    <source>
        <dbReference type="HAMAP-Rule" id="MF_01307"/>
    </source>
</evidence>
<evidence type="ECO:0000305" key="2"/>
<proteinExistence type="inferred from homology"/>
<feature type="chain" id="PRO_0000131457" description="Small ribosomal subunit protein uS5">
    <location>
        <begin position="1"/>
        <end position="174"/>
    </location>
</feature>
<feature type="domain" description="S5 DRBM" evidence="1">
    <location>
        <begin position="18"/>
        <end position="81"/>
    </location>
</feature>
<dbReference type="EMBL" id="BA000019">
    <property type="protein sequence ID" value="BAB75898.1"/>
    <property type="molecule type" value="Genomic_DNA"/>
</dbReference>
<dbReference type="PIR" id="AH2330">
    <property type="entry name" value="AH2330"/>
</dbReference>
<dbReference type="RefSeq" id="WP_010998337.1">
    <property type="nucleotide sequence ID" value="NZ_RSCN01000010.1"/>
</dbReference>
<dbReference type="SMR" id="Q8YPJ5"/>
<dbReference type="STRING" id="103690.gene:10496248"/>
<dbReference type="GeneID" id="58723365"/>
<dbReference type="KEGG" id="ana:all4199"/>
<dbReference type="eggNOG" id="COG0098">
    <property type="taxonomic scope" value="Bacteria"/>
</dbReference>
<dbReference type="OrthoDB" id="9809045at2"/>
<dbReference type="Proteomes" id="UP000002483">
    <property type="component" value="Chromosome"/>
</dbReference>
<dbReference type="GO" id="GO:0015935">
    <property type="term" value="C:small ribosomal subunit"/>
    <property type="evidence" value="ECO:0007669"/>
    <property type="project" value="InterPro"/>
</dbReference>
<dbReference type="GO" id="GO:0019843">
    <property type="term" value="F:rRNA binding"/>
    <property type="evidence" value="ECO:0007669"/>
    <property type="project" value="UniProtKB-UniRule"/>
</dbReference>
<dbReference type="GO" id="GO:0003735">
    <property type="term" value="F:structural constituent of ribosome"/>
    <property type="evidence" value="ECO:0007669"/>
    <property type="project" value="InterPro"/>
</dbReference>
<dbReference type="GO" id="GO:0006412">
    <property type="term" value="P:translation"/>
    <property type="evidence" value="ECO:0007669"/>
    <property type="project" value="UniProtKB-UniRule"/>
</dbReference>
<dbReference type="FunFam" id="3.30.160.20:FF:000001">
    <property type="entry name" value="30S ribosomal protein S5"/>
    <property type="match status" value="1"/>
</dbReference>
<dbReference type="FunFam" id="3.30.230.10:FF:000002">
    <property type="entry name" value="30S ribosomal protein S5"/>
    <property type="match status" value="1"/>
</dbReference>
<dbReference type="Gene3D" id="3.30.160.20">
    <property type="match status" value="1"/>
</dbReference>
<dbReference type="Gene3D" id="3.30.230.10">
    <property type="match status" value="1"/>
</dbReference>
<dbReference type="HAMAP" id="MF_01307_B">
    <property type="entry name" value="Ribosomal_uS5_B"/>
    <property type="match status" value="1"/>
</dbReference>
<dbReference type="InterPro" id="IPR020568">
    <property type="entry name" value="Ribosomal_Su5_D2-typ_SF"/>
</dbReference>
<dbReference type="InterPro" id="IPR000851">
    <property type="entry name" value="Ribosomal_uS5"/>
</dbReference>
<dbReference type="InterPro" id="IPR005712">
    <property type="entry name" value="Ribosomal_uS5_bac-type"/>
</dbReference>
<dbReference type="InterPro" id="IPR005324">
    <property type="entry name" value="Ribosomal_uS5_C"/>
</dbReference>
<dbReference type="InterPro" id="IPR013810">
    <property type="entry name" value="Ribosomal_uS5_N"/>
</dbReference>
<dbReference type="InterPro" id="IPR018192">
    <property type="entry name" value="Ribosomal_uS5_N_CS"/>
</dbReference>
<dbReference type="InterPro" id="IPR014721">
    <property type="entry name" value="Ribsml_uS5_D2-typ_fold_subgr"/>
</dbReference>
<dbReference type="NCBIfam" id="TIGR01021">
    <property type="entry name" value="rpsE_bact"/>
    <property type="match status" value="1"/>
</dbReference>
<dbReference type="PANTHER" id="PTHR48277">
    <property type="entry name" value="MITOCHONDRIAL RIBOSOMAL PROTEIN S5"/>
    <property type="match status" value="1"/>
</dbReference>
<dbReference type="PANTHER" id="PTHR48277:SF1">
    <property type="entry name" value="MITOCHONDRIAL RIBOSOMAL PROTEIN S5"/>
    <property type="match status" value="1"/>
</dbReference>
<dbReference type="Pfam" id="PF00333">
    <property type="entry name" value="Ribosomal_S5"/>
    <property type="match status" value="1"/>
</dbReference>
<dbReference type="Pfam" id="PF03719">
    <property type="entry name" value="Ribosomal_S5_C"/>
    <property type="match status" value="1"/>
</dbReference>
<dbReference type="SUPFAM" id="SSF54768">
    <property type="entry name" value="dsRNA-binding domain-like"/>
    <property type="match status" value="1"/>
</dbReference>
<dbReference type="SUPFAM" id="SSF54211">
    <property type="entry name" value="Ribosomal protein S5 domain 2-like"/>
    <property type="match status" value="1"/>
</dbReference>
<dbReference type="PROSITE" id="PS00585">
    <property type="entry name" value="RIBOSOMAL_S5"/>
    <property type="match status" value="1"/>
</dbReference>
<dbReference type="PROSITE" id="PS50881">
    <property type="entry name" value="S5_DSRBD"/>
    <property type="match status" value="1"/>
</dbReference>
<sequence length="174" mass="18256">MATGRRKANRTKKEETNWQERVIQIRRVSKVVKGGKKLSFRAIVVVGNERGQVGVGVGKASDVIGAVKKGVADGKKHLIDIPITKSNSIPHPIDGVGGGAKVMMRPAAPGTGVIAGGAVRTVLELAGVRNVLAKQLGSNNPLNNARAAVNALSTLRTLAEVAEDRGIAIEKLYI</sequence>
<reference key="1">
    <citation type="journal article" date="2001" name="DNA Res.">
        <title>Complete genomic sequence of the filamentous nitrogen-fixing cyanobacterium Anabaena sp. strain PCC 7120.</title>
        <authorList>
            <person name="Kaneko T."/>
            <person name="Nakamura Y."/>
            <person name="Wolk C.P."/>
            <person name="Kuritz T."/>
            <person name="Sasamoto S."/>
            <person name="Watanabe A."/>
            <person name="Iriguchi M."/>
            <person name="Ishikawa A."/>
            <person name="Kawashima K."/>
            <person name="Kimura T."/>
            <person name="Kishida Y."/>
            <person name="Kohara M."/>
            <person name="Matsumoto M."/>
            <person name="Matsuno A."/>
            <person name="Muraki A."/>
            <person name="Nakazaki N."/>
            <person name="Shimpo S."/>
            <person name="Sugimoto M."/>
            <person name="Takazawa M."/>
            <person name="Yamada M."/>
            <person name="Yasuda M."/>
            <person name="Tabata S."/>
        </authorList>
    </citation>
    <scope>NUCLEOTIDE SEQUENCE [LARGE SCALE GENOMIC DNA]</scope>
    <source>
        <strain>PCC 7120 / SAG 25.82 / UTEX 2576</strain>
    </source>
</reference>
<keyword id="KW-1185">Reference proteome</keyword>
<keyword id="KW-0687">Ribonucleoprotein</keyword>
<keyword id="KW-0689">Ribosomal protein</keyword>
<keyword id="KW-0694">RNA-binding</keyword>
<keyword id="KW-0699">rRNA-binding</keyword>
<comment type="function">
    <text evidence="1">With S4 and S12 plays an important role in translational accuracy.</text>
</comment>
<comment type="function">
    <text evidence="1">Located at the back of the 30S subunit body where it stabilizes the conformation of the head with respect to the body.</text>
</comment>
<comment type="subunit">
    <text evidence="1">Part of the 30S ribosomal subunit. Contacts proteins S4 and S8.</text>
</comment>
<comment type="domain">
    <text>The N-terminal domain interacts with the head of the 30S subunit; the C-terminal domain interacts with the body and contacts protein S4. The interaction surface between S4 and S5 is involved in control of translational fidelity.</text>
</comment>
<comment type="similarity">
    <text evidence="1">Belongs to the universal ribosomal protein uS5 family.</text>
</comment>
<gene>
    <name evidence="1" type="primary">rpsE</name>
    <name evidence="1" type="synonym">rps5</name>
    <name type="ordered locus">all4199</name>
</gene>